<organism>
    <name type="scientific">Lactiplantibacillus plantarum (strain ATCC BAA-793 / NCIMB 8826 / WCFS1)</name>
    <name type="common">Lactobacillus plantarum</name>
    <dbReference type="NCBI Taxonomy" id="220668"/>
    <lineage>
        <taxon>Bacteria</taxon>
        <taxon>Bacillati</taxon>
        <taxon>Bacillota</taxon>
        <taxon>Bacilli</taxon>
        <taxon>Lactobacillales</taxon>
        <taxon>Lactobacillaceae</taxon>
        <taxon>Lactiplantibacillus</taxon>
    </lineage>
</organism>
<accession>O08319</accession>
<accession>F9UL04</accession>
<name>ARGJ_LACPL</name>
<proteinExistence type="inferred from homology"/>
<keyword id="KW-0012">Acyltransferase</keyword>
<keyword id="KW-0028">Amino-acid biosynthesis</keyword>
<keyword id="KW-0055">Arginine biosynthesis</keyword>
<keyword id="KW-0068">Autocatalytic cleavage</keyword>
<keyword id="KW-0963">Cytoplasm</keyword>
<keyword id="KW-0511">Multifunctional enzyme</keyword>
<keyword id="KW-1185">Reference proteome</keyword>
<keyword id="KW-0808">Transferase</keyword>
<dbReference type="EC" id="2.3.1.35" evidence="1"/>
<dbReference type="EC" id="2.3.1.1" evidence="1"/>
<dbReference type="EMBL" id="X99978">
    <property type="protein sequence ID" value="CAA68240.1"/>
    <property type="molecule type" value="Genomic_DNA"/>
</dbReference>
<dbReference type="EMBL" id="AL935263">
    <property type="protein sequence ID" value="CCC78019.1"/>
    <property type="molecule type" value="Genomic_DNA"/>
</dbReference>
<dbReference type="RefSeq" id="WP_011101044.1">
    <property type="nucleotide sequence ID" value="NC_004567.2"/>
</dbReference>
<dbReference type="RefSeq" id="YP_004888533.1">
    <property type="nucleotide sequence ID" value="NC_004567.2"/>
</dbReference>
<dbReference type="SMR" id="O08319"/>
<dbReference type="STRING" id="220668.lp_0529"/>
<dbReference type="MEROPS" id="T05.002"/>
<dbReference type="EnsemblBacteria" id="CCC78019">
    <property type="protein sequence ID" value="CCC78019"/>
    <property type="gene ID" value="lp_0529"/>
</dbReference>
<dbReference type="GeneID" id="77217135"/>
<dbReference type="KEGG" id="lpl:lp_0529"/>
<dbReference type="PATRIC" id="fig|220668.9.peg.437"/>
<dbReference type="eggNOG" id="COG1364">
    <property type="taxonomic scope" value="Bacteria"/>
</dbReference>
<dbReference type="HOGENOM" id="CLU_027172_1_0_9"/>
<dbReference type="OrthoDB" id="9804242at2"/>
<dbReference type="PhylomeDB" id="O08319"/>
<dbReference type="UniPathway" id="UPA00068">
    <property type="reaction ID" value="UER00106"/>
</dbReference>
<dbReference type="UniPathway" id="UPA00068">
    <property type="reaction ID" value="UER00111"/>
</dbReference>
<dbReference type="Proteomes" id="UP000000432">
    <property type="component" value="Chromosome"/>
</dbReference>
<dbReference type="GO" id="GO:0005737">
    <property type="term" value="C:cytoplasm"/>
    <property type="evidence" value="ECO:0007669"/>
    <property type="project" value="UniProtKB-SubCell"/>
</dbReference>
<dbReference type="GO" id="GO:0004358">
    <property type="term" value="F:glutamate N-acetyltransferase activity"/>
    <property type="evidence" value="ECO:0007669"/>
    <property type="project" value="UniProtKB-UniRule"/>
</dbReference>
<dbReference type="GO" id="GO:0004042">
    <property type="term" value="F:L-glutamate N-acetyltransferase activity"/>
    <property type="evidence" value="ECO:0007669"/>
    <property type="project" value="UniProtKB-UniRule"/>
</dbReference>
<dbReference type="GO" id="GO:0006526">
    <property type="term" value="P:L-arginine biosynthetic process"/>
    <property type="evidence" value="ECO:0007669"/>
    <property type="project" value="UniProtKB-UniRule"/>
</dbReference>
<dbReference type="GO" id="GO:0006592">
    <property type="term" value="P:ornithine biosynthetic process"/>
    <property type="evidence" value="ECO:0007669"/>
    <property type="project" value="TreeGrafter"/>
</dbReference>
<dbReference type="CDD" id="cd02152">
    <property type="entry name" value="OAT"/>
    <property type="match status" value="1"/>
</dbReference>
<dbReference type="FunFam" id="3.10.20.340:FF:000001">
    <property type="entry name" value="Arginine biosynthesis bifunctional protein ArgJ, chloroplastic"/>
    <property type="match status" value="1"/>
</dbReference>
<dbReference type="FunFam" id="3.60.70.12:FF:000001">
    <property type="entry name" value="Arginine biosynthesis bifunctional protein ArgJ, chloroplastic"/>
    <property type="match status" value="1"/>
</dbReference>
<dbReference type="Gene3D" id="3.10.20.340">
    <property type="entry name" value="ArgJ beta chain, C-terminal domain"/>
    <property type="match status" value="1"/>
</dbReference>
<dbReference type="Gene3D" id="3.60.70.12">
    <property type="entry name" value="L-amino peptidase D-ALA esterase/amidase"/>
    <property type="match status" value="1"/>
</dbReference>
<dbReference type="HAMAP" id="MF_01106">
    <property type="entry name" value="ArgJ"/>
    <property type="match status" value="1"/>
</dbReference>
<dbReference type="InterPro" id="IPR002813">
    <property type="entry name" value="Arg_biosynth_ArgJ"/>
</dbReference>
<dbReference type="InterPro" id="IPR016117">
    <property type="entry name" value="ArgJ-like_dom_sf"/>
</dbReference>
<dbReference type="InterPro" id="IPR042195">
    <property type="entry name" value="ArgJ_beta_C"/>
</dbReference>
<dbReference type="NCBIfam" id="TIGR00120">
    <property type="entry name" value="ArgJ"/>
    <property type="match status" value="1"/>
</dbReference>
<dbReference type="NCBIfam" id="NF003802">
    <property type="entry name" value="PRK05388.1"/>
    <property type="match status" value="1"/>
</dbReference>
<dbReference type="PANTHER" id="PTHR23100">
    <property type="entry name" value="ARGININE BIOSYNTHESIS BIFUNCTIONAL PROTEIN ARGJ"/>
    <property type="match status" value="1"/>
</dbReference>
<dbReference type="PANTHER" id="PTHR23100:SF0">
    <property type="entry name" value="ARGININE BIOSYNTHESIS BIFUNCTIONAL PROTEIN ARGJ, MITOCHONDRIAL"/>
    <property type="match status" value="1"/>
</dbReference>
<dbReference type="Pfam" id="PF01960">
    <property type="entry name" value="ArgJ"/>
    <property type="match status" value="1"/>
</dbReference>
<dbReference type="SUPFAM" id="SSF56266">
    <property type="entry name" value="DmpA/ArgJ-like"/>
    <property type="match status" value="1"/>
</dbReference>
<reference key="1">
    <citation type="journal article" date="1997" name="J. Bacteriol.">
        <title>Arginine biosynthesis and regulation in Lactobacillus plantarum: the carA gene and the argCJBDF cluster are divergently transcribed.</title>
        <authorList>
            <person name="Bringel F."/>
            <person name="Frey L."/>
            <person name="Boivin S."/>
            <person name="Hubert J.-C."/>
        </authorList>
    </citation>
    <scope>NUCLEOTIDE SEQUENCE [GENOMIC DNA]</scope>
    <source>
        <strain>ATCC 8014 / CCM 1904 / DSM 20205 / NCDO 82 / NCIB 6376</strain>
    </source>
</reference>
<reference key="2">
    <citation type="journal article" date="2003" name="Proc. Natl. Acad. Sci. U.S.A.">
        <title>Complete genome sequence of Lactobacillus plantarum WCFS1.</title>
        <authorList>
            <person name="Kleerebezem M."/>
            <person name="Boekhorst J."/>
            <person name="van Kranenburg R."/>
            <person name="Molenaar D."/>
            <person name="Kuipers O.P."/>
            <person name="Leer R."/>
            <person name="Tarchini R."/>
            <person name="Peters S.A."/>
            <person name="Sandbrink H.M."/>
            <person name="Fiers M.W.E.J."/>
            <person name="Stiekema W."/>
            <person name="Klein Lankhorst R.M."/>
            <person name="Bron P.A."/>
            <person name="Hoffer S.M."/>
            <person name="Nierop Groot M.N."/>
            <person name="Kerkhoven R."/>
            <person name="De Vries M."/>
            <person name="Ursing B."/>
            <person name="De Vos W.M."/>
            <person name="Siezen R.J."/>
        </authorList>
    </citation>
    <scope>NUCLEOTIDE SEQUENCE [LARGE SCALE GENOMIC DNA]</scope>
    <source>
        <strain>ATCC BAA-793 / NCIMB 8826 / WCFS1</strain>
    </source>
</reference>
<reference key="3">
    <citation type="journal article" date="2012" name="J. Bacteriol.">
        <title>Complete resequencing and reannotation of the Lactobacillus plantarum WCFS1 genome.</title>
        <authorList>
            <person name="Siezen R.J."/>
            <person name="Francke C."/>
            <person name="Renckens B."/>
            <person name="Boekhorst J."/>
            <person name="Wels M."/>
            <person name="Kleerebezem M."/>
            <person name="van Hijum S.A."/>
        </authorList>
    </citation>
    <scope>NUCLEOTIDE SEQUENCE [LARGE SCALE GENOMIC DNA]</scope>
    <scope>GENOME REANNOTATION</scope>
    <source>
        <strain>ATCC BAA-793 / NCIMB 8826 / WCFS1</strain>
    </source>
</reference>
<evidence type="ECO:0000255" key="1">
    <source>
        <dbReference type="HAMAP-Rule" id="MF_01106"/>
    </source>
</evidence>
<protein>
    <recommendedName>
        <fullName evidence="1">Arginine biosynthesis bifunctional protein ArgJ</fullName>
    </recommendedName>
    <domain>
        <recommendedName>
            <fullName evidence="1">Glutamate N-acetyltransferase</fullName>
            <ecNumber evidence="1">2.3.1.35</ecNumber>
        </recommendedName>
        <alternativeName>
            <fullName evidence="1">Ornithine acetyltransferase</fullName>
            <shortName evidence="1">OATase</shortName>
        </alternativeName>
        <alternativeName>
            <fullName evidence="1">Ornithine transacetylase</fullName>
        </alternativeName>
    </domain>
    <domain>
        <recommendedName>
            <fullName evidence="1">Amino-acid acetyltransferase</fullName>
            <ecNumber evidence="1">2.3.1.1</ecNumber>
        </recommendedName>
        <alternativeName>
            <fullName evidence="1">N-acetylglutamate synthase</fullName>
            <shortName evidence="1">AGSase</shortName>
        </alternativeName>
    </domain>
    <component>
        <recommendedName>
            <fullName evidence="1">Arginine biosynthesis bifunctional protein ArgJ alpha chain</fullName>
        </recommendedName>
    </component>
    <component>
        <recommendedName>
            <fullName evidence="1">Arginine biosynthesis bifunctional protein ArgJ beta chain</fullName>
        </recommendedName>
    </component>
</protein>
<sequence>MQVLTNTKFETVAFQWPAGFYSDGIHIGLRRHKKDFGWLFSKVPASAAGTYTTNQFQAAPTKLTKQMIDQGHQLQGLLLNSAIANSCTGEQGWQNALQEQAWLANKLNVAPNLIGVASTGLIGAQLPMDKIKNGLPQLTPTKSDAVTYAVLTTDQHPKTVCVQCELSGQLVTLTGFAKGSGMIHPKMATMLGFVTTDAQIDGPVLQDMLSTNVDQTFNQITVDGDTSTNDMVVTLANGLADNPSLQAGTTDYDIFNQALHYVLGQLAKQIAADGEGATKLVECNVVHAATTFDGQQIAKAIVGSNLVKAAIFGEDPNWGRIISTIGATDADIDVATVDIEMNGVLLVQQSLAVDFDMAAVQATLRDNQIMIDVDLHHGTASGQAWGCDLTYNYVKINASYHT</sequence>
<comment type="function">
    <text evidence="1">Catalyzes two activities which are involved in the cyclic version of arginine biosynthesis: the synthesis of N-acetylglutamate from glutamate and acetyl-CoA as the acetyl donor, and of ornithine by transacetylation between N(2)-acetylornithine and glutamate.</text>
</comment>
<comment type="catalytic activity">
    <reaction evidence="1">
        <text>N(2)-acetyl-L-ornithine + L-glutamate = N-acetyl-L-glutamate + L-ornithine</text>
        <dbReference type="Rhea" id="RHEA:15349"/>
        <dbReference type="ChEBI" id="CHEBI:29985"/>
        <dbReference type="ChEBI" id="CHEBI:44337"/>
        <dbReference type="ChEBI" id="CHEBI:46911"/>
        <dbReference type="ChEBI" id="CHEBI:57805"/>
        <dbReference type="EC" id="2.3.1.35"/>
    </reaction>
</comment>
<comment type="catalytic activity">
    <reaction evidence="1">
        <text>L-glutamate + acetyl-CoA = N-acetyl-L-glutamate + CoA + H(+)</text>
        <dbReference type="Rhea" id="RHEA:24292"/>
        <dbReference type="ChEBI" id="CHEBI:15378"/>
        <dbReference type="ChEBI" id="CHEBI:29985"/>
        <dbReference type="ChEBI" id="CHEBI:44337"/>
        <dbReference type="ChEBI" id="CHEBI:57287"/>
        <dbReference type="ChEBI" id="CHEBI:57288"/>
        <dbReference type="EC" id="2.3.1.1"/>
    </reaction>
</comment>
<comment type="pathway">
    <text evidence="1">Amino-acid biosynthesis; L-arginine biosynthesis; L-ornithine and N-acetyl-L-glutamate from L-glutamate and N(2)-acetyl-L-ornithine (cyclic): step 1/1.</text>
</comment>
<comment type="pathway">
    <text evidence="1">Amino-acid biosynthesis; L-arginine biosynthesis; N(2)-acetyl-L-ornithine from L-glutamate: step 1/4.</text>
</comment>
<comment type="subunit">
    <text evidence="1">Heterotetramer of two alpha and two beta chains.</text>
</comment>
<comment type="subcellular location">
    <subcellularLocation>
        <location evidence="1">Cytoplasm</location>
    </subcellularLocation>
</comment>
<comment type="similarity">
    <text evidence="1">Belongs to the ArgJ family.</text>
</comment>
<gene>
    <name evidence="1" type="primary">argJ</name>
    <name type="ordered locus">lp_0529</name>
</gene>
<feature type="chain" id="PRO_0000002177" description="Arginine biosynthesis bifunctional protein ArgJ alpha chain" evidence="1">
    <location>
        <begin position="1"/>
        <end position="188"/>
    </location>
</feature>
<feature type="chain" id="PRO_0000002178" description="Arginine biosynthesis bifunctional protein ArgJ beta chain" evidence="1">
    <location>
        <begin position="189"/>
        <end position="402"/>
    </location>
</feature>
<feature type="active site" description="Nucleophile" evidence="1">
    <location>
        <position position="189"/>
    </location>
</feature>
<feature type="binding site" evidence="1">
    <location>
        <position position="152"/>
    </location>
    <ligand>
        <name>substrate</name>
    </ligand>
</feature>
<feature type="binding site" evidence="1">
    <location>
        <position position="178"/>
    </location>
    <ligand>
        <name>substrate</name>
    </ligand>
</feature>
<feature type="binding site" evidence="1">
    <location>
        <position position="189"/>
    </location>
    <ligand>
        <name>substrate</name>
    </ligand>
</feature>
<feature type="binding site" evidence="1">
    <location>
        <position position="275"/>
    </location>
    <ligand>
        <name>substrate</name>
    </ligand>
</feature>
<feature type="binding site" evidence="1">
    <location>
        <position position="397"/>
    </location>
    <ligand>
        <name>substrate</name>
    </ligand>
</feature>
<feature type="binding site" evidence="1">
    <location>
        <position position="402"/>
    </location>
    <ligand>
        <name>substrate</name>
    </ligand>
</feature>
<feature type="site" description="Involved in the stabilization of negative charge on the oxyanion by the formation of the oxyanion hole" evidence="1">
    <location>
        <position position="119"/>
    </location>
</feature>
<feature type="site" description="Involved in the stabilization of negative charge on the oxyanion by the formation of the oxyanion hole" evidence="1">
    <location>
        <position position="120"/>
    </location>
</feature>
<feature type="site" description="Cleavage; by autolysis" evidence="1">
    <location>
        <begin position="188"/>
        <end position="189"/>
    </location>
</feature>